<name>SYGA_CLOD6</name>
<feature type="chain" id="PRO_1000047412" description="Glycine--tRNA ligase alpha subunit">
    <location>
        <begin position="1"/>
        <end position="292"/>
    </location>
</feature>
<organism>
    <name type="scientific">Clostridioides difficile (strain 630)</name>
    <name type="common">Peptoclostridium difficile</name>
    <dbReference type="NCBI Taxonomy" id="272563"/>
    <lineage>
        <taxon>Bacteria</taxon>
        <taxon>Bacillati</taxon>
        <taxon>Bacillota</taxon>
        <taxon>Clostridia</taxon>
        <taxon>Peptostreptococcales</taxon>
        <taxon>Peptostreptococcaceae</taxon>
        <taxon>Clostridioides</taxon>
    </lineage>
</organism>
<sequence>MNFQEMILALQKYWSKQGCIMMQPYDIEKGAGTMNPNTFLRSLGPEPWQVCYVEPSRRPADGRYGENPNRLYQHHQFQVILKPSPDNIQELYLESLKEIGIDPSEHDIRFVEDNWEAATVGAWGLGWEVWLDGMEITQFTYFQQVGNIECELETGEITYGLERLAMYIQEVDSVYDLKWNDKITYGEVFNKAEYENSMYAFELCDADMLFNLFDIYEKEALRLMENGLVIPSYDYVLKCSHAFNTLDARGAIGVSQRASFIGRVRNMAKTVAETFVKQREEMGFPLLKDGDK</sequence>
<reference key="1">
    <citation type="journal article" date="2006" name="Nat. Genet.">
        <title>The multidrug-resistant human pathogen Clostridium difficile has a highly mobile, mosaic genome.</title>
        <authorList>
            <person name="Sebaihia M."/>
            <person name="Wren B.W."/>
            <person name="Mullany P."/>
            <person name="Fairweather N.F."/>
            <person name="Minton N."/>
            <person name="Stabler R."/>
            <person name="Thomson N.R."/>
            <person name="Roberts A.P."/>
            <person name="Cerdeno-Tarraga A.M."/>
            <person name="Wang H."/>
            <person name="Holden M.T.G."/>
            <person name="Wright A."/>
            <person name="Churcher C."/>
            <person name="Quail M.A."/>
            <person name="Baker S."/>
            <person name="Bason N."/>
            <person name="Brooks K."/>
            <person name="Chillingworth T."/>
            <person name="Cronin A."/>
            <person name="Davis P."/>
            <person name="Dowd L."/>
            <person name="Fraser A."/>
            <person name="Feltwell T."/>
            <person name="Hance Z."/>
            <person name="Holroyd S."/>
            <person name="Jagels K."/>
            <person name="Moule S."/>
            <person name="Mungall K."/>
            <person name="Price C."/>
            <person name="Rabbinowitsch E."/>
            <person name="Sharp S."/>
            <person name="Simmonds M."/>
            <person name="Stevens K."/>
            <person name="Unwin L."/>
            <person name="Whithead S."/>
            <person name="Dupuy B."/>
            <person name="Dougan G."/>
            <person name="Barrell B."/>
            <person name="Parkhill J."/>
        </authorList>
    </citation>
    <scope>NUCLEOTIDE SEQUENCE [LARGE SCALE GENOMIC DNA]</scope>
    <source>
        <strain>630</strain>
    </source>
</reference>
<protein>
    <recommendedName>
        <fullName evidence="1">Glycine--tRNA ligase alpha subunit</fullName>
        <ecNumber evidence="1">6.1.1.14</ecNumber>
    </recommendedName>
    <alternativeName>
        <fullName evidence="1">Glycyl-tRNA synthetase alpha subunit</fullName>
        <shortName evidence="1">GlyRS</shortName>
    </alternativeName>
</protein>
<proteinExistence type="inferred from homology"/>
<comment type="catalytic activity">
    <reaction evidence="1">
        <text>tRNA(Gly) + glycine + ATP = glycyl-tRNA(Gly) + AMP + diphosphate</text>
        <dbReference type="Rhea" id="RHEA:16013"/>
        <dbReference type="Rhea" id="RHEA-COMP:9664"/>
        <dbReference type="Rhea" id="RHEA-COMP:9683"/>
        <dbReference type="ChEBI" id="CHEBI:30616"/>
        <dbReference type="ChEBI" id="CHEBI:33019"/>
        <dbReference type="ChEBI" id="CHEBI:57305"/>
        <dbReference type="ChEBI" id="CHEBI:78442"/>
        <dbReference type="ChEBI" id="CHEBI:78522"/>
        <dbReference type="ChEBI" id="CHEBI:456215"/>
        <dbReference type="EC" id="6.1.1.14"/>
    </reaction>
</comment>
<comment type="subunit">
    <text evidence="1">Tetramer of two alpha and two beta subunits.</text>
</comment>
<comment type="subcellular location">
    <subcellularLocation>
        <location evidence="1">Cytoplasm</location>
    </subcellularLocation>
</comment>
<comment type="similarity">
    <text evidence="1">Belongs to the class-II aminoacyl-tRNA synthetase family.</text>
</comment>
<dbReference type="EC" id="6.1.1.14" evidence="1"/>
<dbReference type="EMBL" id="AM180355">
    <property type="protein sequence ID" value="CAJ69319.1"/>
    <property type="molecule type" value="Genomic_DNA"/>
</dbReference>
<dbReference type="RefSeq" id="WP_003416656.1">
    <property type="nucleotide sequence ID" value="NZ_JAUPES010000003.1"/>
</dbReference>
<dbReference type="RefSeq" id="YP_001088946.1">
    <property type="nucleotide sequence ID" value="NC_009089.1"/>
</dbReference>
<dbReference type="SMR" id="Q182B9"/>
<dbReference type="STRING" id="272563.CD630_24330"/>
<dbReference type="EnsemblBacteria" id="CAJ69319">
    <property type="protein sequence ID" value="CAJ69319"/>
    <property type="gene ID" value="CD630_24330"/>
</dbReference>
<dbReference type="GeneID" id="66354829"/>
<dbReference type="KEGG" id="cdf:CD630_24330"/>
<dbReference type="KEGG" id="pdc:CDIF630_02676"/>
<dbReference type="PATRIC" id="fig|272563.120.peg.2568"/>
<dbReference type="eggNOG" id="COG0752">
    <property type="taxonomic scope" value="Bacteria"/>
</dbReference>
<dbReference type="OrthoDB" id="9802183at2"/>
<dbReference type="PhylomeDB" id="Q182B9"/>
<dbReference type="BioCyc" id="PDIF272563:G12WB-2585-MONOMER"/>
<dbReference type="Proteomes" id="UP000001978">
    <property type="component" value="Chromosome"/>
</dbReference>
<dbReference type="GO" id="GO:0005829">
    <property type="term" value="C:cytosol"/>
    <property type="evidence" value="ECO:0007669"/>
    <property type="project" value="TreeGrafter"/>
</dbReference>
<dbReference type="GO" id="GO:0005524">
    <property type="term" value="F:ATP binding"/>
    <property type="evidence" value="ECO:0007669"/>
    <property type="project" value="UniProtKB-UniRule"/>
</dbReference>
<dbReference type="GO" id="GO:0140096">
    <property type="term" value="F:catalytic activity, acting on a protein"/>
    <property type="evidence" value="ECO:0007669"/>
    <property type="project" value="UniProtKB-ARBA"/>
</dbReference>
<dbReference type="GO" id="GO:0004820">
    <property type="term" value="F:glycine-tRNA ligase activity"/>
    <property type="evidence" value="ECO:0007669"/>
    <property type="project" value="UniProtKB-UniRule"/>
</dbReference>
<dbReference type="GO" id="GO:0016740">
    <property type="term" value="F:transferase activity"/>
    <property type="evidence" value="ECO:0007669"/>
    <property type="project" value="UniProtKB-ARBA"/>
</dbReference>
<dbReference type="GO" id="GO:0006426">
    <property type="term" value="P:glycyl-tRNA aminoacylation"/>
    <property type="evidence" value="ECO:0007669"/>
    <property type="project" value="UniProtKB-UniRule"/>
</dbReference>
<dbReference type="CDD" id="cd00733">
    <property type="entry name" value="GlyRS_alpha_core"/>
    <property type="match status" value="1"/>
</dbReference>
<dbReference type="FunFam" id="3.30.930.10:FF:000006">
    <property type="entry name" value="Glycine--tRNA ligase alpha subunit"/>
    <property type="match status" value="1"/>
</dbReference>
<dbReference type="Gene3D" id="3.30.930.10">
    <property type="entry name" value="Bira Bifunctional Protein, Domain 2"/>
    <property type="match status" value="1"/>
</dbReference>
<dbReference type="Gene3D" id="1.20.58.180">
    <property type="entry name" value="Class II aaRS and biotin synthetases, domain 2"/>
    <property type="match status" value="1"/>
</dbReference>
<dbReference type="HAMAP" id="MF_00254">
    <property type="entry name" value="Gly_tRNA_synth_alpha"/>
    <property type="match status" value="1"/>
</dbReference>
<dbReference type="InterPro" id="IPR045864">
    <property type="entry name" value="aa-tRNA-synth_II/BPL/LPL"/>
</dbReference>
<dbReference type="InterPro" id="IPR006194">
    <property type="entry name" value="Gly-tRNA-synth_heterodimer"/>
</dbReference>
<dbReference type="InterPro" id="IPR002310">
    <property type="entry name" value="Gly-tRNA_ligase_asu"/>
</dbReference>
<dbReference type="NCBIfam" id="TIGR00388">
    <property type="entry name" value="glyQ"/>
    <property type="match status" value="1"/>
</dbReference>
<dbReference type="NCBIfam" id="NF006827">
    <property type="entry name" value="PRK09348.1"/>
    <property type="match status" value="1"/>
</dbReference>
<dbReference type="PANTHER" id="PTHR30075:SF2">
    <property type="entry name" value="GLYCINE--TRNA LIGASE, CHLOROPLASTIC_MITOCHONDRIAL 2"/>
    <property type="match status" value="1"/>
</dbReference>
<dbReference type="PANTHER" id="PTHR30075">
    <property type="entry name" value="GLYCYL-TRNA SYNTHETASE"/>
    <property type="match status" value="1"/>
</dbReference>
<dbReference type="Pfam" id="PF02091">
    <property type="entry name" value="tRNA-synt_2e"/>
    <property type="match status" value="1"/>
</dbReference>
<dbReference type="PRINTS" id="PR01044">
    <property type="entry name" value="TRNASYNTHGA"/>
</dbReference>
<dbReference type="SUPFAM" id="SSF55681">
    <property type="entry name" value="Class II aaRS and biotin synthetases"/>
    <property type="match status" value="1"/>
</dbReference>
<dbReference type="PROSITE" id="PS50861">
    <property type="entry name" value="AA_TRNA_LIGASE_II_GLYAB"/>
    <property type="match status" value="1"/>
</dbReference>
<gene>
    <name evidence="1" type="primary">glyQ</name>
    <name type="ordered locus">CD630_24330</name>
</gene>
<accession>Q182B9</accession>
<evidence type="ECO:0000255" key="1">
    <source>
        <dbReference type="HAMAP-Rule" id="MF_00254"/>
    </source>
</evidence>
<keyword id="KW-0030">Aminoacyl-tRNA synthetase</keyword>
<keyword id="KW-0067">ATP-binding</keyword>
<keyword id="KW-0963">Cytoplasm</keyword>
<keyword id="KW-0436">Ligase</keyword>
<keyword id="KW-0547">Nucleotide-binding</keyword>
<keyword id="KW-0648">Protein biosynthesis</keyword>
<keyword id="KW-1185">Reference proteome</keyword>